<dbReference type="EC" id="6.1.1.21" evidence="1"/>
<dbReference type="EMBL" id="CP000395">
    <property type="protein sequence ID" value="ABH01400.1"/>
    <property type="molecule type" value="Genomic_DNA"/>
</dbReference>
<dbReference type="EMBL" id="CP002933">
    <property type="protein sequence ID" value="AEL69366.1"/>
    <property type="molecule type" value="Genomic_DNA"/>
</dbReference>
<dbReference type="RefSeq" id="WP_004790371.1">
    <property type="nucleotide sequence ID" value="NZ_CP160066.1"/>
</dbReference>
<dbReference type="SMR" id="Q0SP28"/>
<dbReference type="STRING" id="29518.BLA32_03615"/>
<dbReference type="GeneID" id="76831674"/>
<dbReference type="KEGG" id="baf:BAPKO_0137"/>
<dbReference type="KEGG" id="bafz:BafPKo_0133"/>
<dbReference type="PATRIC" id="fig|390236.22.peg.132"/>
<dbReference type="eggNOG" id="COG0124">
    <property type="taxonomic scope" value="Bacteria"/>
</dbReference>
<dbReference type="HOGENOM" id="CLU_025113_3_0_12"/>
<dbReference type="OrthoDB" id="9800814at2"/>
<dbReference type="Proteomes" id="UP000005216">
    <property type="component" value="Chromosome"/>
</dbReference>
<dbReference type="GO" id="GO:0005737">
    <property type="term" value="C:cytoplasm"/>
    <property type="evidence" value="ECO:0007669"/>
    <property type="project" value="UniProtKB-SubCell"/>
</dbReference>
<dbReference type="GO" id="GO:0005524">
    <property type="term" value="F:ATP binding"/>
    <property type="evidence" value="ECO:0007669"/>
    <property type="project" value="UniProtKB-UniRule"/>
</dbReference>
<dbReference type="GO" id="GO:0004821">
    <property type="term" value="F:histidine-tRNA ligase activity"/>
    <property type="evidence" value="ECO:0007669"/>
    <property type="project" value="UniProtKB-UniRule"/>
</dbReference>
<dbReference type="GO" id="GO:0006427">
    <property type="term" value="P:histidyl-tRNA aminoacylation"/>
    <property type="evidence" value="ECO:0007669"/>
    <property type="project" value="UniProtKB-UniRule"/>
</dbReference>
<dbReference type="CDD" id="cd00773">
    <property type="entry name" value="HisRS-like_core"/>
    <property type="match status" value="1"/>
</dbReference>
<dbReference type="CDD" id="cd00859">
    <property type="entry name" value="HisRS_anticodon"/>
    <property type="match status" value="1"/>
</dbReference>
<dbReference type="Gene3D" id="3.40.50.800">
    <property type="entry name" value="Anticodon-binding domain"/>
    <property type="match status" value="1"/>
</dbReference>
<dbReference type="Gene3D" id="3.30.930.10">
    <property type="entry name" value="Bira Bifunctional Protein, Domain 2"/>
    <property type="match status" value="1"/>
</dbReference>
<dbReference type="HAMAP" id="MF_00127">
    <property type="entry name" value="His_tRNA_synth"/>
    <property type="match status" value="1"/>
</dbReference>
<dbReference type="InterPro" id="IPR006195">
    <property type="entry name" value="aa-tRNA-synth_II"/>
</dbReference>
<dbReference type="InterPro" id="IPR045864">
    <property type="entry name" value="aa-tRNA-synth_II/BPL/LPL"/>
</dbReference>
<dbReference type="InterPro" id="IPR004154">
    <property type="entry name" value="Anticodon-bd"/>
</dbReference>
<dbReference type="InterPro" id="IPR036621">
    <property type="entry name" value="Anticodon-bd_dom_sf"/>
</dbReference>
<dbReference type="InterPro" id="IPR015807">
    <property type="entry name" value="His-tRNA-ligase"/>
</dbReference>
<dbReference type="InterPro" id="IPR041715">
    <property type="entry name" value="HisRS-like_core"/>
</dbReference>
<dbReference type="InterPro" id="IPR004516">
    <property type="entry name" value="HisRS/HisZ"/>
</dbReference>
<dbReference type="InterPro" id="IPR033656">
    <property type="entry name" value="HisRS_anticodon"/>
</dbReference>
<dbReference type="NCBIfam" id="TIGR00442">
    <property type="entry name" value="hisS"/>
    <property type="match status" value="1"/>
</dbReference>
<dbReference type="PANTHER" id="PTHR11476:SF7">
    <property type="entry name" value="HISTIDINE--TRNA LIGASE"/>
    <property type="match status" value="1"/>
</dbReference>
<dbReference type="PANTHER" id="PTHR11476">
    <property type="entry name" value="HISTIDYL-TRNA SYNTHETASE"/>
    <property type="match status" value="1"/>
</dbReference>
<dbReference type="Pfam" id="PF03129">
    <property type="entry name" value="HGTP_anticodon"/>
    <property type="match status" value="1"/>
</dbReference>
<dbReference type="Pfam" id="PF13393">
    <property type="entry name" value="tRNA-synt_His"/>
    <property type="match status" value="1"/>
</dbReference>
<dbReference type="PIRSF" id="PIRSF001549">
    <property type="entry name" value="His-tRNA_synth"/>
    <property type="match status" value="1"/>
</dbReference>
<dbReference type="SUPFAM" id="SSF52954">
    <property type="entry name" value="Class II aaRS ABD-related"/>
    <property type="match status" value="1"/>
</dbReference>
<dbReference type="SUPFAM" id="SSF55681">
    <property type="entry name" value="Class II aaRS and biotin synthetases"/>
    <property type="match status" value="1"/>
</dbReference>
<dbReference type="PROSITE" id="PS50862">
    <property type="entry name" value="AA_TRNA_LIGASE_II"/>
    <property type="match status" value="1"/>
</dbReference>
<name>SYH_BORAP</name>
<protein>
    <recommendedName>
        <fullName evidence="1">Histidine--tRNA ligase</fullName>
        <ecNumber evidence="1">6.1.1.21</ecNumber>
    </recommendedName>
    <alternativeName>
        <fullName evidence="1">Histidyl-tRNA synthetase</fullName>
        <shortName evidence="1">HisRS</shortName>
    </alternativeName>
</protein>
<reference key="1">
    <citation type="journal article" date="2006" name="BMC Genomics">
        <title>Comparative genome analysis: selection pressure on the Borrelia vls cassettes is essential for infectivity.</title>
        <authorList>
            <person name="Gloeckner G."/>
            <person name="Schulte-Spechtel U."/>
            <person name="Schilhabel M."/>
            <person name="Felder M."/>
            <person name="Suehnel J."/>
            <person name="Wilske B."/>
            <person name="Platzer M."/>
        </authorList>
    </citation>
    <scope>NUCLEOTIDE SEQUENCE [LARGE SCALE GENOMIC DNA]</scope>
    <source>
        <strain>PKo</strain>
    </source>
</reference>
<reference key="2">
    <citation type="journal article" date="2011" name="J. Bacteriol.">
        <title>Whole-genome sequences of two Borrelia afzelii and two Borrelia garinii Lyme disease agent isolates.</title>
        <authorList>
            <person name="Casjens S.R."/>
            <person name="Mongodin E.F."/>
            <person name="Qiu W.G."/>
            <person name="Dunn J.J."/>
            <person name="Luft B.J."/>
            <person name="Fraser-Liggett C.M."/>
            <person name="Schutzer S.E."/>
        </authorList>
    </citation>
    <scope>NUCLEOTIDE SEQUENCE [LARGE SCALE GENOMIC DNA]</scope>
    <source>
        <strain>PKo</strain>
    </source>
</reference>
<evidence type="ECO:0000255" key="1">
    <source>
        <dbReference type="HAMAP-Rule" id="MF_00127"/>
    </source>
</evidence>
<gene>
    <name evidence="1" type="primary">hisS</name>
    <name type="ordered locus">BAPKO_0137</name>
    <name type="ordered locus">BafPKo_0133</name>
</gene>
<sequence>MDIKTLKGFKDYLPKDSLIRIHIVRQIFSVLNSYNFDLIDTPVLEYSELLLKKSGDEAEKQIYRFKDNGGRDVSMRFDLTVPFARFIATNASNLKFPFRRSQFGKVFRGENSQKGRYREFMQFDFDIVGEDSFRGDAEILSVVYYGLEEIFLNFIEGINKKFIIHYSHLGILNSFFEKLGIKEKSLFILRNIDKIDKIGVDKVKEALLLKIEKEVVDSILNLVNLQGTFKEKIQALKSILGDNESVKRVEDVFQHLSLLKIQDSFNLNLKISRGLDYYTGIVFESEVFDSNMGSVCSGGRYDNLVSSFSSSIQKISGVGGSFGVDRIKDIIDLEKFSYVKIFVTKARSKVLIVNLDSALQDYYYELATRFRNHDYSKVKNISCEVYFKNKNGKNIKEQIEYALSKEIRFLVFVGQEEYKENKMKVRDLTKKEELLLSFEESINVIKCSEKLLCTPF</sequence>
<accession>Q0SP28</accession>
<accession>G0IQY0</accession>
<feature type="chain" id="PRO_1000016316" description="Histidine--tRNA ligase">
    <location>
        <begin position="1"/>
        <end position="456"/>
    </location>
</feature>
<organism>
    <name type="scientific">Borreliella afzelii (strain PKo)</name>
    <name type="common">Borrelia afzelii</name>
    <dbReference type="NCBI Taxonomy" id="390236"/>
    <lineage>
        <taxon>Bacteria</taxon>
        <taxon>Pseudomonadati</taxon>
        <taxon>Spirochaetota</taxon>
        <taxon>Spirochaetia</taxon>
        <taxon>Spirochaetales</taxon>
        <taxon>Borreliaceae</taxon>
        <taxon>Borreliella</taxon>
    </lineage>
</organism>
<keyword id="KW-0030">Aminoacyl-tRNA synthetase</keyword>
<keyword id="KW-0067">ATP-binding</keyword>
<keyword id="KW-0963">Cytoplasm</keyword>
<keyword id="KW-0436">Ligase</keyword>
<keyword id="KW-0547">Nucleotide-binding</keyword>
<keyword id="KW-0648">Protein biosynthesis</keyword>
<proteinExistence type="inferred from homology"/>
<comment type="catalytic activity">
    <reaction evidence="1">
        <text>tRNA(His) + L-histidine + ATP = L-histidyl-tRNA(His) + AMP + diphosphate + H(+)</text>
        <dbReference type="Rhea" id="RHEA:17313"/>
        <dbReference type="Rhea" id="RHEA-COMP:9665"/>
        <dbReference type="Rhea" id="RHEA-COMP:9689"/>
        <dbReference type="ChEBI" id="CHEBI:15378"/>
        <dbReference type="ChEBI" id="CHEBI:30616"/>
        <dbReference type="ChEBI" id="CHEBI:33019"/>
        <dbReference type="ChEBI" id="CHEBI:57595"/>
        <dbReference type="ChEBI" id="CHEBI:78442"/>
        <dbReference type="ChEBI" id="CHEBI:78527"/>
        <dbReference type="ChEBI" id="CHEBI:456215"/>
        <dbReference type="EC" id="6.1.1.21"/>
    </reaction>
</comment>
<comment type="subunit">
    <text evidence="1">Homodimer.</text>
</comment>
<comment type="subcellular location">
    <subcellularLocation>
        <location evidence="1">Cytoplasm</location>
    </subcellularLocation>
</comment>
<comment type="similarity">
    <text evidence="1">Belongs to the class-II aminoacyl-tRNA synthetase family.</text>
</comment>